<organism>
    <name type="scientific">Xenopus laevis</name>
    <name type="common">African clawed frog</name>
    <dbReference type="NCBI Taxonomy" id="8355"/>
    <lineage>
        <taxon>Eukaryota</taxon>
        <taxon>Metazoa</taxon>
        <taxon>Chordata</taxon>
        <taxon>Craniata</taxon>
        <taxon>Vertebrata</taxon>
        <taxon>Euteleostomi</taxon>
        <taxon>Amphibia</taxon>
        <taxon>Batrachia</taxon>
        <taxon>Anura</taxon>
        <taxon>Pipoidea</taxon>
        <taxon>Pipidae</taxon>
        <taxon>Xenopodinae</taxon>
        <taxon>Xenopus</taxon>
        <taxon>Xenopus</taxon>
    </lineage>
</organism>
<keyword id="KW-0002">3D-structure</keyword>
<keyword id="KW-0007">Acetylation</keyword>
<keyword id="KW-0013">ADP-ribosylation</keyword>
<keyword id="KW-0158">Chromosome</keyword>
<keyword id="KW-0238">DNA-binding</keyword>
<keyword id="KW-0379">Hydroxylation</keyword>
<keyword id="KW-0488">Methylation</keyword>
<keyword id="KW-0544">Nucleosome core</keyword>
<keyword id="KW-0539">Nucleus</keyword>
<keyword id="KW-0597">Phosphoprotein</keyword>
<keyword id="KW-1185">Reference proteome</keyword>
<keyword id="KW-0832">Ubl conjugation</keyword>
<sequence length="136" mass="15328">MARTKQTARKSTGGKAPRKQLATKAARKSAPSTGGVKKPHRYRPGTVALREIRRYQKSTELLIRKLPFQRLVREIAQDFKTDLRFQSAAIGALQEASEAYLVGLFEDTNLCAIHAKRVTIMPKDIQLARRIRGERA</sequence>
<proteinExistence type="evidence at protein level"/>
<evidence type="ECO:0000250" key="1">
    <source>
        <dbReference type="UniProtKB" id="P68431"/>
    </source>
</evidence>
<evidence type="ECO:0000250" key="2">
    <source>
        <dbReference type="UniProtKB" id="P68433"/>
    </source>
</evidence>
<evidence type="ECO:0000250" key="3">
    <source>
        <dbReference type="UniProtKB" id="P84243"/>
    </source>
</evidence>
<evidence type="ECO:0000250" key="4">
    <source>
        <dbReference type="UniProtKB" id="P84244"/>
    </source>
</evidence>
<evidence type="ECO:0000250" key="5">
    <source>
        <dbReference type="UniProtKB" id="P84245"/>
    </source>
</evidence>
<evidence type="ECO:0000256" key="6">
    <source>
        <dbReference type="SAM" id="MobiDB-lite"/>
    </source>
</evidence>
<evidence type="ECO:0000269" key="7">
    <source>
    </source>
</evidence>
<evidence type="ECO:0000305" key="8"/>
<evidence type="ECO:0007829" key="9">
    <source>
        <dbReference type="PDB" id="7EA8"/>
    </source>
</evidence>
<feature type="initiator methionine" description="Removed" evidence="8">
    <location>
        <position position="1"/>
    </location>
</feature>
<feature type="chain" id="PRO_0000253957" description="Histone H3.3">
    <location>
        <begin position="2"/>
        <end position="136"/>
    </location>
</feature>
<feature type="region of interest" description="Disordered" evidence="6">
    <location>
        <begin position="1"/>
        <end position="43"/>
    </location>
</feature>
<feature type="site" description="Interaction with zmynd11" evidence="3">
    <location>
        <position position="32"/>
    </location>
</feature>
<feature type="modified residue" description="Asymmetric dimethylarginine; by PRMT6" evidence="3">
    <location>
        <position position="3"/>
    </location>
</feature>
<feature type="modified residue" description="Phosphothreonine; by HASPIN and VRK1" evidence="3">
    <location>
        <position position="4"/>
    </location>
</feature>
<feature type="modified residue" description="Allysine; alternate" evidence="3">
    <location>
        <position position="5"/>
    </location>
</feature>
<feature type="modified residue" description="N6,N6,N6-trimethyllysine; alternate" evidence="7">
    <location>
        <position position="5"/>
    </location>
</feature>
<feature type="modified residue" description="N6,N6-dimethyllysine; alternate" evidence="7">
    <location>
        <position position="5"/>
    </location>
</feature>
<feature type="modified residue" description="N6-(2-hydroxyisobutyryl)lysine; alternate" evidence="1">
    <location>
        <position position="5"/>
    </location>
</feature>
<feature type="modified residue" description="N6-acetyllysine; alternate" evidence="3">
    <location>
        <position position="5"/>
    </location>
</feature>
<feature type="modified residue" description="N6-methyllysine; alternate" evidence="7">
    <location>
        <position position="5"/>
    </location>
</feature>
<feature type="modified residue" description="5-glutamyl dopamine; alternate" evidence="3">
    <location>
        <position position="6"/>
    </location>
</feature>
<feature type="modified residue" description="5-glutamyl serotonin; alternate" evidence="3">
    <location>
        <position position="6"/>
    </location>
</feature>
<feature type="modified residue" description="Phosphothreonine; by PKC" evidence="3">
    <location>
        <position position="7"/>
    </location>
</feature>
<feature type="modified residue" description="N6-(2-hydroxyisobutyryl)lysine; alternate" evidence="1">
    <location>
        <position position="10"/>
    </location>
</feature>
<feature type="modified residue" description="N6-lactoyllysine; alternate" evidence="3">
    <location>
        <position position="10"/>
    </location>
</feature>
<feature type="modified residue" description="N6-methylated lysine" evidence="7">
    <location>
        <position position="10"/>
    </location>
</feature>
<feature type="modified residue" description="ADP-ribosylserine; alternate" evidence="1">
    <location>
        <position position="11"/>
    </location>
</feature>
<feature type="modified residue" description="Phosphoserine; alternate; by AURKB, AURKC, RPS6KA3, RPS6KA4 and RPS6KA5" evidence="3">
    <location>
        <position position="11"/>
    </location>
</feature>
<feature type="modified residue" description="Phosphothreonine; by PKC" evidence="3">
    <location>
        <position position="12"/>
    </location>
</feature>
<feature type="modified residue" description="N6-(2-hydroxyisobutyryl)lysine; alternate" evidence="1">
    <location>
        <position position="15"/>
    </location>
</feature>
<feature type="modified residue" description="N6-acetyllysine" evidence="7">
    <location>
        <position position="15"/>
    </location>
</feature>
<feature type="modified residue" description="N6-glutaryllysine; alternate" evidence="3">
    <location>
        <position position="15"/>
    </location>
</feature>
<feature type="modified residue" description="N6-lactoyllysine; alternate" evidence="4">
    <location>
        <position position="15"/>
    </location>
</feature>
<feature type="modified residue" description="Asymmetric dimethylarginine" evidence="7">
    <location>
        <position position="18"/>
    </location>
</feature>
<feature type="modified residue" description="N6-(2-hydroxyisobutyryl)lysine; alternate" evidence="1">
    <location>
        <position position="19"/>
    </location>
</feature>
<feature type="modified residue" description="N6-acetyllysine; alternate" evidence="3">
    <location>
        <position position="19"/>
    </location>
</feature>
<feature type="modified residue" description="N6-butyryllysine; alternate" evidence="2">
    <location>
        <position position="19"/>
    </location>
</feature>
<feature type="modified residue" description="N6-glutaryllysine; alternate" evidence="3">
    <location>
        <position position="19"/>
    </location>
</feature>
<feature type="modified residue" description="N6-lactoyllysine; alternate" evidence="3">
    <location>
        <position position="19"/>
    </location>
</feature>
<feature type="modified residue" description="N6-methylated lysine; alternate" evidence="3">
    <location>
        <position position="19"/>
    </location>
</feature>
<feature type="modified residue" description="N6-(2-hydroxyisobutyryl)lysine; alternate" evidence="1">
    <location>
        <position position="24"/>
    </location>
</feature>
<feature type="modified residue" description="N6-acetyllysine" evidence="3">
    <location>
        <position position="24"/>
    </location>
</feature>
<feature type="modified residue" description="N6-butyryllysine; alternate" evidence="2">
    <location>
        <position position="24"/>
    </location>
</feature>
<feature type="modified residue" description="N6-glutaryllysine; alternate" evidence="3">
    <location>
        <position position="24"/>
    </location>
</feature>
<feature type="modified residue" description="N6-lactoyllysine; alternate" evidence="3">
    <location>
        <position position="24"/>
    </location>
</feature>
<feature type="modified residue" description="N6-(2-hydroxyisobutyryl)lysine; alternate" evidence="1">
    <location>
        <position position="28"/>
    </location>
</feature>
<feature type="modified residue" description="N6-acetyllysine; alternate" evidence="3">
    <location>
        <position position="28"/>
    </location>
</feature>
<feature type="modified residue" description="N6-glutaryllysine; alternate" evidence="3">
    <location>
        <position position="28"/>
    </location>
</feature>
<feature type="modified residue" description="N6-lactoyllysine; alternate" evidence="3">
    <location>
        <position position="28"/>
    </location>
</feature>
<feature type="modified residue" description="N6-methylated lysine; alternate" evidence="3">
    <location>
        <position position="28"/>
    </location>
</feature>
<feature type="modified residue" description="ADP-ribosylserine; alternate" evidence="1">
    <location>
        <position position="29"/>
    </location>
</feature>
<feature type="modified residue" description="Phosphoserine; alternate; by AURKB, AURKC and RPS6KA5" evidence="3">
    <location>
        <position position="29"/>
    </location>
</feature>
<feature type="modified residue" description="N6-(2-hydroxyisobutyryl)lysine; alternate" evidence="1">
    <location>
        <position position="37"/>
    </location>
</feature>
<feature type="modified residue" description="N6-acetyllysine; alternate" evidence="3">
    <location>
        <position position="37"/>
    </location>
</feature>
<feature type="modified residue" description="N6-methylated lysine; alternate" evidence="3">
    <location>
        <position position="37"/>
    </location>
</feature>
<feature type="modified residue" description="Phosphotyrosine" evidence="3">
    <location>
        <position position="42"/>
    </location>
</feature>
<feature type="modified residue" description="N6-(2-hydroxyisobutyryl)lysine; alternate" evidence="1">
    <location>
        <position position="57"/>
    </location>
</feature>
<feature type="modified residue" description="N6-glutaryllysine; alternate" evidence="3">
    <location>
        <position position="57"/>
    </location>
</feature>
<feature type="modified residue" description="N6-lactoyllysine; alternate" evidence="4">
    <location>
        <position position="57"/>
    </location>
</feature>
<feature type="modified residue" description="N6-succinyllysine; alternate" evidence="4">
    <location>
        <position position="57"/>
    </location>
</feature>
<feature type="modified residue" description="Phosphoserine" evidence="3">
    <location>
        <position position="58"/>
    </location>
</feature>
<feature type="modified residue" description="N6-(2-hydroxyisobutyryl)lysine; alternate" evidence="1">
    <location>
        <position position="65"/>
    </location>
</feature>
<feature type="modified residue" description="N6-methylated lysine" evidence="3">
    <location>
        <position position="65"/>
    </location>
</feature>
<feature type="modified residue" description="N6-(2-hydroxyisobutyryl)lysine; alternate" evidence="1">
    <location>
        <position position="80"/>
    </location>
</feature>
<feature type="modified residue" description="N6-glutaryllysine; alternate" evidence="3">
    <location>
        <position position="80"/>
    </location>
</feature>
<feature type="modified residue" description="N6-lactoyllysine; alternate" evidence="3">
    <location>
        <position position="80"/>
    </location>
</feature>
<feature type="modified residue" description="N6-methylated lysine" evidence="3">
    <location>
        <position position="80"/>
    </location>
</feature>
<feature type="modified residue" description="N6-succinyllysine; alternate" evidence="4">
    <location>
        <position position="80"/>
    </location>
</feature>
<feature type="modified residue" description="Phosphothreonine" evidence="3">
    <location>
        <position position="81"/>
    </location>
</feature>
<feature type="modified residue" description="N6-acetyllysine; alternate" evidence="3">
    <location>
        <position position="116"/>
    </location>
</feature>
<feature type="modified residue" description="N6-glutaryllysine; alternate" evidence="3">
    <location>
        <position position="116"/>
    </location>
</feature>
<feature type="modified residue" description="N6-(2-hydroxyisobutyryl)lysine; alternate" evidence="1">
    <location>
        <position position="123"/>
    </location>
</feature>
<feature type="modified residue" description="N6-acetyllysine; alternate" evidence="3">
    <location>
        <position position="123"/>
    </location>
</feature>
<feature type="modified residue" description="N6-glutaryllysine; alternate" evidence="3">
    <location>
        <position position="123"/>
    </location>
</feature>
<feature type="modified residue" description="N6-methyllysine; alternate" evidence="3">
    <location>
        <position position="123"/>
    </location>
</feature>
<feature type="modified residue" description="N6-succinyllysine; alternate" evidence="3">
    <location>
        <position position="123"/>
    </location>
</feature>
<feature type="helix" evidence="9">
    <location>
        <begin position="46"/>
        <end position="57"/>
    </location>
</feature>
<feature type="helix" evidence="9">
    <location>
        <begin position="65"/>
        <end position="76"/>
    </location>
</feature>
<feature type="turn" evidence="9">
    <location>
        <begin position="77"/>
        <end position="79"/>
    </location>
</feature>
<feature type="strand" evidence="9">
    <location>
        <begin position="80"/>
        <end position="82"/>
    </location>
</feature>
<feature type="helix" evidence="9">
    <location>
        <begin position="88"/>
        <end position="114"/>
    </location>
</feature>
<feature type="strand" evidence="9">
    <location>
        <begin position="118"/>
        <end position="120"/>
    </location>
</feature>
<feature type="helix" evidence="9">
    <location>
        <begin position="122"/>
        <end position="132"/>
    </location>
</feature>
<dbReference type="EMBL" id="BC041218">
    <property type="protein sequence ID" value="AAH41218.1"/>
    <property type="molecule type" value="mRNA"/>
</dbReference>
<dbReference type="EMBL" id="BC042290">
    <property type="protein sequence ID" value="AAH42290.1"/>
    <property type="molecule type" value="mRNA"/>
</dbReference>
<dbReference type="EMBL" id="BC042309">
    <property type="protein sequence ID" value="AAH42309.1"/>
    <property type="molecule type" value="mRNA"/>
</dbReference>
<dbReference type="EMBL" id="BC070966">
    <property type="protein sequence ID" value="AAH70966.1"/>
    <property type="molecule type" value="mRNA"/>
</dbReference>
<dbReference type="EMBL" id="BC074158">
    <property type="protein sequence ID" value="AAH74158.1"/>
    <property type="molecule type" value="mRNA"/>
</dbReference>
<dbReference type="EMBL" id="BC106302">
    <property type="protein sequence ID" value="AAI06303.1"/>
    <property type="molecule type" value="mRNA"/>
</dbReference>
<dbReference type="EMBL" id="BC123120">
    <property type="protein sequence ID" value="AAI23121.1"/>
    <property type="molecule type" value="mRNA"/>
</dbReference>
<dbReference type="RefSeq" id="NP_001079375.1">
    <property type="nucleotide sequence ID" value="NM_001085906.1"/>
</dbReference>
<dbReference type="RefSeq" id="NP_001080065.1">
    <property type="nucleotide sequence ID" value="NM_001086596.1"/>
</dbReference>
<dbReference type="RefSeq" id="NP_001085048.1">
    <property type="nucleotide sequence ID" value="NM_001091579.1"/>
</dbReference>
<dbReference type="RefSeq" id="NP_001086074.1">
    <property type="nucleotide sequence ID" value="NM_001092605.1"/>
</dbReference>
<dbReference type="RefSeq" id="NP_001091902.1">
    <property type="nucleotide sequence ID" value="NM_001098432.1"/>
</dbReference>
<dbReference type="RefSeq" id="XP_018091870.1">
    <property type="nucleotide sequence ID" value="XM_018236381.1"/>
</dbReference>
<dbReference type="RefSeq" id="XP_018118148.1">
    <property type="nucleotide sequence ID" value="XM_018262659.2"/>
</dbReference>
<dbReference type="RefSeq" id="XP_018119714.1">
    <property type="nucleotide sequence ID" value="XM_018264225.2"/>
</dbReference>
<dbReference type="RefSeq" id="XP_041431432.1">
    <property type="nucleotide sequence ID" value="XM_041575498.1"/>
</dbReference>
<dbReference type="RefSeq" id="XP_041432473.1">
    <property type="nucleotide sequence ID" value="XM_041576539.1"/>
</dbReference>
<dbReference type="RefSeq" id="XP_041432474.1">
    <property type="nucleotide sequence ID" value="XM_041576540.1"/>
</dbReference>
<dbReference type="RefSeq" id="XP_041432475.1">
    <property type="nucleotide sequence ID" value="XM_041576541.1"/>
</dbReference>
<dbReference type="RefSeq" id="XP_041434842.1">
    <property type="nucleotide sequence ID" value="XM_041578908.1"/>
</dbReference>
<dbReference type="RefSeq" id="XP_041434843.1">
    <property type="nucleotide sequence ID" value="XM_041578909.1"/>
</dbReference>
<dbReference type="PDB" id="6LTJ">
    <property type="method" value="EM"/>
    <property type="resolution" value="3.70 A"/>
    <property type="chains" value="A/E=1-136"/>
</dbReference>
<dbReference type="PDB" id="7EA8">
    <property type="method" value="EM"/>
    <property type="resolution" value="3.10 A"/>
    <property type="chains" value="A/E=34-134"/>
</dbReference>
<dbReference type="PDBsum" id="6LTJ"/>
<dbReference type="PDBsum" id="7EA8"/>
<dbReference type="EMDB" id="EMD-0974"/>
<dbReference type="EMDB" id="EMD-31040"/>
<dbReference type="SASBDB" id="Q6PI79"/>
<dbReference type="SMR" id="Q6PI79"/>
<dbReference type="BioGRID" id="102666">
    <property type="interactions" value="1"/>
</dbReference>
<dbReference type="iPTMnet" id="Q6PI79"/>
<dbReference type="DNASU" id="108701569"/>
<dbReference type="DNASU" id="108716488"/>
<dbReference type="DNASU" id="379062"/>
<dbReference type="DNASU" id="379757"/>
<dbReference type="DNASU" id="399418"/>
<dbReference type="DNASU" id="432115"/>
<dbReference type="DNASU" id="444503"/>
<dbReference type="GeneID" id="108701569"/>
<dbReference type="GeneID" id="108716488"/>
<dbReference type="GeneID" id="379062"/>
<dbReference type="GeneID" id="379757"/>
<dbReference type="GeneID" id="399418"/>
<dbReference type="GeneID" id="432115"/>
<dbReference type="GeneID" id="444503"/>
<dbReference type="KEGG" id="xla:108716488"/>
<dbReference type="KEGG" id="xla:379062"/>
<dbReference type="KEGG" id="xla:379757"/>
<dbReference type="KEGG" id="xla:444503"/>
<dbReference type="AGR" id="Xenbase:XB-GENE-6251829"/>
<dbReference type="CTD" id="379062"/>
<dbReference type="CTD" id="379757"/>
<dbReference type="CTD" id="399418"/>
<dbReference type="CTD" id="444503"/>
<dbReference type="Xenbase" id="XB-GENE-6251829">
    <property type="gene designation" value="h3-5.L"/>
</dbReference>
<dbReference type="OrthoDB" id="9929128at2759"/>
<dbReference type="EvolutionaryTrace" id="Q6PI79"/>
<dbReference type="Proteomes" id="UP000186698">
    <property type="component" value="Chromosome 5L"/>
</dbReference>
<dbReference type="Proteomes" id="UP000186698">
    <property type="component" value="Chromosome 5S"/>
</dbReference>
<dbReference type="Proteomes" id="UP000186698">
    <property type="component" value="Chromosome 9_10L"/>
</dbReference>
<dbReference type="Proteomes" id="UP000186698">
    <property type="component" value="Chromosome 9_10S"/>
</dbReference>
<dbReference type="Bgee" id="108701569">
    <property type="expression patterns" value="Expressed in gastrula and 19 other cell types or tissues"/>
</dbReference>
<dbReference type="GO" id="GO:0000786">
    <property type="term" value="C:nucleosome"/>
    <property type="evidence" value="ECO:0007669"/>
    <property type="project" value="UniProtKB-KW"/>
</dbReference>
<dbReference type="GO" id="GO:0005634">
    <property type="term" value="C:nucleus"/>
    <property type="evidence" value="ECO:0000318"/>
    <property type="project" value="GO_Central"/>
</dbReference>
<dbReference type="GO" id="GO:0003677">
    <property type="term" value="F:DNA binding"/>
    <property type="evidence" value="ECO:0007669"/>
    <property type="project" value="UniProtKB-KW"/>
</dbReference>
<dbReference type="GO" id="GO:0046982">
    <property type="term" value="F:protein heterodimerization activity"/>
    <property type="evidence" value="ECO:0007669"/>
    <property type="project" value="InterPro"/>
</dbReference>
<dbReference type="GO" id="GO:0030527">
    <property type="term" value="F:structural constituent of chromatin"/>
    <property type="evidence" value="ECO:0007669"/>
    <property type="project" value="InterPro"/>
</dbReference>
<dbReference type="CDD" id="cd22911">
    <property type="entry name" value="HFD_H3"/>
    <property type="match status" value="1"/>
</dbReference>
<dbReference type="FunFam" id="1.10.20.10:FF:000078">
    <property type="entry name" value="Histone H3"/>
    <property type="match status" value="1"/>
</dbReference>
<dbReference type="FunFam" id="1.10.20.10:FF:000044">
    <property type="entry name" value="Histone H3.3"/>
    <property type="match status" value="1"/>
</dbReference>
<dbReference type="Gene3D" id="1.10.20.10">
    <property type="entry name" value="Histone, subunit A"/>
    <property type="match status" value="1"/>
</dbReference>
<dbReference type="InterPro" id="IPR009072">
    <property type="entry name" value="Histone-fold"/>
</dbReference>
<dbReference type="InterPro" id="IPR007125">
    <property type="entry name" value="Histone_H2A/H2B/H3"/>
</dbReference>
<dbReference type="InterPro" id="IPR000164">
    <property type="entry name" value="Histone_H3/CENP-A"/>
</dbReference>
<dbReference type="PANTHER" id="PTHR11426">
    <property type="entry name" value="HISTONE H3"/>
    <property type="match status" value="1"/>
</dbReference>
<dbReference type="Pfam" id="PF00125">
    <property type="entry name" value="Histone"/>
    <property type="match status" value="1"/>
</dbReference>
<dbReference type="PRINTS" id="PR00622">
    <property type="entry name" value="HISTONEH3"/>
</dbReference>
<dbReference type="SMART" id="SM00428">
    <property type="entry name" value="H3"/>
    <property type="match status" value="1"/>
</dbReference>
<dbReference type="SUPFAM" id="SSF47113">
    <property type="entry name" value="Histone-fold"/>
    <property type="match status" value="1"/>
</dbReference>
<dbReference type="PROSITE" id="PS00322">
    <property type="entry name" value="HISTONE_H3_1"/>
    <property type="match status" value="1"/>
</dbReference>
<dbReference type="PROSITE" id="PS00959">
    <property type="entry name" value="HISTONE_H3_2"/>
    <property type="match status" value="1"/>
</dbReference>
<reference key="1">
    <citation type="submission" date="2006-09" db="EMBL/GenBank/DDBJ databases">
        <authorList>
            <consortium name="NIH - Xenopus Gene Collection (XGC) project"/>
        </authorList>
    </citation>
    <scope>NUCLEOTIDE SEQUENCE [LARGE SCALE MRNA]</scope>
    <source>
        <tissue>Embryo</tissue>
    </source>
</reference>
<reference key="2">
    <citation type="journal article" date="2002" name="Mol. Cell. Biol.">
        <title>Involvement of histone methylation and phosphorylation in regulation of transcription by thyroid hormone receptor.</title>
        <authorList>
            <person name="Li J."/>
            <person name="Lin Q."/>
            <person name="Yoon H.-G."/>
            <person name="Huang Z.-Q."/>
            <person name="Strahl B.D."/>
            <person name="Allis C.D."/>
            <person name="Wong J."/>
        </authorList>
    </citation>
    <scope>METHYLATION AT LYS-5; LYS-10 AND ARG-18</scope>
    <scope>PHOSPHORYLATION AT SER-11</scope>
    <scope>ACETYLATION AT LYS-15</scope>
</reference>
<protein>
    <recommendedName>
        <fullName>Histone H3.3</fullName>
    </recommendedName>
</protein>
<accession>Q6PI79</accession>
<accession>Q05AX9</accession>
<comment type="function">
    <text evidence="3">Variant histone H3 which replaces conventional H3 in a wide range of nucleosomes in active genes. Constitutes the predominant form of histone H3 in non-dividing cells and is incorporated into chromatin independently of DNA synthesis. Deposited at sites of nucleosomal displacement throughout transcribed genes, suggesting that it represents an epigenetic imprint of transcriptionally active chromatin. Nucleosomes wrap and compact DNA into chromatin, limiting DNA accessibility to the cellular machineries which require DNA as a template. Histones thereby play a central role in transcription regulation, DNA repair, DNA replication and chromosomal stability. DNA accessibility is regulated via a complex set of post-translational modifications of histones, also called histone code, and nucleosome remodeling.</text>
</comment>
<comment type="subunit">
    <text evidence="3">The nucleosome is a histone octamer containing two molecules each of H2A, H2B, H3 and H4 assembled in one H3-H4 heterotetramer and two H2A-H2B heterodimers. The octamer wraps approximately 147 bp of DNA. Interacts with zmynd11; when trimethylated at 'Lys-36' (H3.3K36me3).</text>
</comment>
<comment type="subcellular location">
    <subcellularLocation>
        <location>Nucleus</location>
    </subcellularLocation>
    <subcellularLocation>
        <location>Chromosome</location>
    </subcellularLocation>
</comment>
<comment type="developmental stage">
    <text>Expressed during S phase, then expression strongly decreases as cell division slows down during the process of differentiation.</text>
</comment>
<comment type="domain">
    <text evidence="3">Specific interaction of trimethylated form at 'Lys-36' (H3.3K36me3) with zmynd11 is mediated by the encapsulation of Ser-32 residue with a composite pocket formed by the tandem bromo-PWWP domains.</text>
</comment>
<comment type="PTM">
    <text evidence="7">Acetylation is generally linked to gene activation. Acetylation on Lys-19 (H3K18ac) and Lys-24 (H3K24ac) favors methylation at Arg-18 (H3R17me). Acetylation at Lys-123 (H3K122ac) by EP300/p300 plays a central role in chromatin structure: localizes at the surface of the histone octamer and stimulates transcription, possibly by promoting nucleosome instability.</text>
</comment>
<comment type="PTM">
    <text evidence="3">Asymmetric dimethylation at Arg-18 (H3R17me2a) is linked to gene activation. Asymmetric dimethylation at Arg-3 (H3R2me2a) by PRMT6 is linked to gene repression and is mutually exclusive with H3 Lys-5 methylation (H3K4me2 and H3K4me3). H3R2me2a is present at the 3' of genes regardless of their transcription state and is enriched on inactive promoters, while it is absent on active promoters (By similarity).</text>
</comment>
<comment type="PTM">
    <text evidence="3">Specifically enriched in modifications associated with active chromatin such as methylation at Lys-5 (H3K4me), Lys-37 (H3K36me) and Lys-80 (H3K79me) are linked to gene activation. Methylation at Lys-5 (H3K4me) facilitates subsequent acetylation of H3 and H4. Methylation at Lys-80 (H3K79me) is associated with DNA double-strand break (DSB) responses and is a specific target for tp53bp1. Methylation at Lys-10 (H3K9me) and Lys-28 (H3K27me) are linked to gene repression. Methylation at Lys-10 (H3K9me) is a specific target for HP1 proteins (cbx1, cbx3 and cbx5) and prevents subsequent phosphorylation at Ser-11 (H3S10ph) and acetylation of H3 and H4. Methylation at Lys-5 (H3K4me) and Lys-80 (H3K79me) require preliminary monoubiquitination of H2B at 'Lys-120' (By similarity).</text>
</comment>
<comment type="PTM">
    <text evidence="3">Phosphorylated at Thr-4 (H3T3ph) by VRK1 (By similarity). Phosphorylated at Thr-4 (H3T3ph) by HASPIN during prophase and dephosphorylated during anaphase. Phosphorylation at Ser-11 (H3S10ph) by aurkb is crucial for chromosome condensation and cell-cycle progression during mitosis and meiosis. In addition phosphorylation at Ser-11 (H3S10ph) by rps6ka4 and rps6ka5 is important during interphase because it enables the transcription of genes following external stimulation, like mitogens, stress, growth factors or UV irradiation and result in the activation of genes, such as c-fos and c-jun. Phosphorylation at Ser-11 (H3S10ph), which is linked to gene activation, prevents methylation at Lys-10 (H3K9me) but facilitates acetylation of H3 and H4. Phosphorylation at Ser-11 (H3S10ph) by aurkb mediates the dissociation of HP1 proteins (cbx1, cbx3 and cbx5) from heterochromatin. Phosphorylation at Ser-11 (H3S10ph) is also an essential regulatory mechanism for neoplastic cell transformation. Phosphorylated at Ser-29 (H3S28ph) by map3k20 isoform 1, rps6ka5 or aurkb during mitosis or upon ultraviolet B irradiation. Phosphorylation at Thr-7 (H3T6ph) by prkcb is a specific tag for epigenetic transcriptional activation that prevents demethylation of Lys-5 (H3K4me) by lsd1/kdm1a. At centromeres, specifically phosphorylated at Thr-12 (H3T11ph) from prophase to early anaphase, by DAPK3 and PKN1. Phosphorylation at Thr-12 (H3T11ph) by PKN1 or isoform M2 of PKM (PKM2) is a specific tag for epigenetic transcriptional activation that promotes demethylation of Lys-10 (H3K9me) by kdm4c/jmjd2c. Phosphorylation at Tyr-42 (H3Y41ph) by jak2 promotes exclusion of cbx5 (HP1 alpha) from chromatin. Phosphorylation on Ser-32 (H3S31ph) is specific to regions bordering centromeres in metaphase chromosomes.</text>
</comment>
<comment type="PTM">
    <text evidence="3">Monoubiquitinated by rag1 in lymphoid cells, monoubiquitination is required for V(D)J recombination.</text>
</comment>
<comment type="PTM">
    <text evidence="3">Lysine deamination at Lys-5 (H3K4all) to form allysine only takes place on H3K4me3 and results in gene repression.</text>
</comment>
<comment type="PTM">
    <text evidence="2">Butyrylation of histones marks active promoters and competes with histone acetylation. It is present during late spermatogenesis.</text>
</comment>
<comment type="PTM">
    <text evidence="3">Succinylation at Lys-80 (H3K79succ) by KAT2A takes place with a maximum frequency around the transcription start sites of genes. It gives a specific tag for epigenetic transcription activation. Desuccinylation at Lys-123 (H3K122succ) by SIRT7 in response to DNA damage promotes chromatin condensation and double-strand breaks (DSBs) repair.</text>
</comment>
<comment type="PTM">
    <text evidence="1">Serine ADP-ribosylation constitutes the primary form of ADP-ribosylation of proteins in response to DNA damage. Serine ADP-ribosylation at Ser-11 (H3S10ADPr) is mutually exclusive with phosphorylation at Ser-11 (H3S10ph) and impairs acetylation at Lys-10 (H3K9ac).</text>
</comment>
<comment type="PTM">
    <text evidence="3">Serotonylated by TGM2 at Gln-6 (H3Q5ser) during serotonergic neuron differentiation (By similarity). H3Q5ser is associated with trimethylation of Lys-5 (H3K4me3) and enhances general transcription factor IID (TFIID) complex-binding to H3K4me3, thereby facilitating transcription (By similarity).</text>
</comment>
<comment type="PTM">
    <text evidence="3 5">Dopaminylated by TGM2 at Gln-6 (H3Q5dop) in ventral tegmental area (VTA) neurons (By similarity). H3Q5dop mediates neurotransmission-independent role of nuclear dopamine by regulating relapse-related transcriptional plasticity in the reward system (By similarity).</text>
</comment>
<comment type="PTM">
    <text evidence="3">Lactylated in macrophages by EP300/P300 by using lactoyl-CoA directly derived from endogenous or exogenous lactate, leading to stimulates gene transcription.</text>
</comment>
<comment type="similarity">
    <text evidence="8">Belongs to the histone H3 family.</text>
</comment>
<name>H33_XENLA</name>